<sequence>MALDSVRKQEIIGKFKQHEKDTGSPEVQIAILTDRINYLTGHLKTHKKDHHSRRGLLKMVGQRRNLLAYLKRTDIERYRKLVTELGLRH</sequence>
<feature type="chain" id="PRO_1000143123" description="Small ribosomal subunit protein uS15">
    <location>
        <begin position="1"/>
        <end position="89"/>
    </location>
</feature>
<reference key="1">
    <citation type="journal article" date="2008" name="J. Bacteriol.">
        <title>The genome of Heliobacterium modesticaldum, a phototrophic representative of the Firmicutes containing the simplest photosynthetic apparatus.</title>
        <authorList>
            <person name="Sattley W.M."/>
            <person name="Madigan M.T."/>
            <person name="Swingley W.D."/>
            <person name="Cheung P.C."/>
            <person name="Clocksin K.M."/>
            <person name="Conrad A.L."/>
            <person name="Dejesa L.C."/>
            <person name="Honchak B.M."/>
            <person name="Jung D.O."/>
            <person name="Karbach L.E."/>
            <person name="Kurdoglu A."/>
            <person name="Lahiri S."/>
            <person name="Mastrian S.D."/>
            <person name="Page L.E."/>
            <person name="Taylor H.L."/>
            <person name="Wang Z.T."/>
            <person name="Raymond J."/>
            <person name="Chen M."/>
            <person name="Blankenship R.E."/>
            <person name="Touchman J.W."/>
        </authorList>
    </citation>
    <scope>NUCLEOTIDE SEQUENCE [LARGE SCALE GENOMIC DNA]</scope>
    <source>
        <strain>ATCC 51547 / Ice1</strain>
    </source>
</reference>
<protein>
    <recommendedName>
        <fullName evidence="1">Small ribosomal subunit protein uS15</fullName>
    </recommendedName>
    <alternativeName>
        <fullName evidence="2">30S ribosomal protein S15</fullName>
    </alternativeName>
</protein>
<proteinExistence type="inferred from homology"/>
<comment type="function">
    <text evidence="1">One of the primary rRNA binding proteins, it binds directly to 16S rRNA where it helps nucleate assembly of the platform of the 30S subunit by binding and bridging several RNA helices of the 16S rRNA.</text>
</comment>
<comment type="function">
    <text evidence="1">Forms an intersubunit bridge (bridge B4) with the 23S rRNA of the 50S subunit in the ribosome.</text>
</comment>
<comment type="subunit">
    <text evidence="1">Part of the 30S ribosomal subunit. Forms a bridge to the 50S subunit in the 70S ribosome, contacting the 23S rRNA.</text>
</comment>
<comment type="similarity">
    <text evidence="1">Belongs to the universal ribosomal protein uS15 family.</text>
</comment>
<evidence type="ECO:0000255" key="1">
    <source>
        <dbReference type="HAMAP-Rule" id="MF_01343"/>
    </source>
</evidence>
<evidence type="ECO:0000305" key="2"/>
<accession>B0THS1</accession>
<gene>
    <name evidence="1" type="primary">rpsO</name>
    <name type="ordered locus">Helmi_22290</name>
    <name type="ORF">HM1_2321</name>
</gene>
<keyword id="KW-1185">Reference proteome</keyword>
<keyword id="KW-0687">Ribonucleoprotein</keyword>
<keyword id="KW-0689">Ribosomal protein</keyword>
<keyword id="KW-0694">RNA-binding</keyword>
<keyword id="KW-0699">rRNA-binding</keyword>
<name>RS15_HELMI</name>
<organism>
    <name type="scientific">Heliobacterium modesticaldum (strain ATCC 51547 / Ice1)</name>
    <dbReference type="NCBI Taxonomy" id="498761"/>
    <lineage>
        <taxon>Bacteria</taxon>
        <taxon>Bacillati</taxon>
        <taxon>Bacillota</taxon>
        <taxon>Clostridia</taxon>
        <taxon>Eubacteriales</taxon>
        <taxon>Heliobacteriaceae</taxon>
        <taxon>Heliomicrobium</taxon>
    </lineage>
</organism>
<dbReference type="EMBL" id="CP000930">
    <property type="protein sequence ID" value="ABZ84854.1"/>
    <property type="molecule type" value="Genomic_DNA"/>
</dbReference>
<dbReference type="SMR" id="B0THS1"/>
<dbReference type="STRING" id="498761.HM1_2321"/>
<dbReference type="KEGG" id="hmo:HM1_2321"/>
<dbReference type="eggNOG" id="COG0184">
    <property type="taxonomic scope" value="Bacteria"/>
</dbReference>
<dbReference type="HOGENOM" id="CLU_148518_0_0_9"/>
<dbReference type="OrthoDB" id="9799262at2"/>
<dbReference type="Proteomes" id="UP000008550">
    <property type="component" value="Chromosome"/>
</dbReference>
<dbReference type="GO" id="GO:0022627">
    <property type="term" value="C:cytosolic small ribosomal subunit"/>
    <property type="evidence" value="ECO:0007669"/>
    <property type="project" value="TreeGrafter"/>
</dbReference>
<dbReference type="GO" id="GO:0019843">
    <property type="term" value="F:rRNA binding"/>
    <property type="evidence" value="ECO:0007669"/>
    <property type="project" value="UniProtKB-UniRule"/>
</dbReference>
<dbReference type="GO" id="GO:0003735">
    <property type="term" value="F:structural constituent of ribosome"/>
    <property type="evidence" value="ECO:0007669"/>
    <property type="project" value="InterPro"/>
</dbReference>
<dbReference type="GO" id="GO:0006412">
    <property type="term" value="P:translation"/>
    <property type="evidence" value="ECO:0007669"/>
    <property type="project" value="UniProtKB-UniRule"/>
</dbReference>
<dbReference type="CDD" id="cd00353">
    <property type="entry name" value="Ribosomal_S15p_S13e"/>
    <property type="match status" value="1"/>
</dbReference>
<dbReference type="FunFam" id="1.10.287.10:FF:000002">
    <property type="entry name" value="30S ribosomal protein S15"/>
    <property type="match status" value="1"/>
</dbReference>
<dbReference type="Gene3D" id="6.10.250.3130">
    <property type="match status" value="1"/>
</dbReference>
<dbReference type="Gene3D" id="1.10.287.10">
    <property type="entry name" value="S15/NS1, RNA-binding"/>
    <property type="match status" value="1"/>
</dbReference>
<dbReference type="HAMAP" id="MF_01343_B">
    <property type="entry name" value="Ribosomal_uS15_B"/>
    <property type="match status" value="1"/>
</dbReference>
<dbReference type="InterPro" id="IPR000589">
    <property type="entry name" value="Ribosomal_uS15"/>
</dbReference>
<dbReference type="InterPro" id="IPR005290">
    <property type="entry name" value="Ribosomal_uS15_bac-type"/>
</dbReference>
<dbReference type="InterPro" id="IPR009068">
    <property type="entry name" value="uS15_NS1_RNA-bd_sf"/>
</dbReference>
<dbReference type="NCBIfam" id="TIGR00952">
    <property type="entry name" value="S15_bact"/>
    <property type="match status" value="1"/>
</dbReference>
<dbReference type="PANTHER" id="PTHR23321">
    <property type="entry name" value="RIBOSOMAL PROTEIN S15, BACTERIAL AND ORGANELLAR"/>
    <property type="match status" value="1"/>
</dbReference>
<dbReference type="PANTHER" id="PTHR23321:SF26">
    <property type="entry name" value="SMALL RIBOSOMAL SUBUNIT PROTEIN US15M"/>
    <property type="match status" value="1"/>
</dbReference>
<dbReference type="Pfam" id="PF00312">
    <property type="entry name" value="Ribosomal_S15"/>
    <property type="match status" value="1"/>
</dbReference>
<dbReference type="SMART" id="SM01387">
    <property type="entry name" value="Ribosomal_S15"/>
    <property type="match status" value="1"/>
</dbReference>
<dbReference type="SUPFAM" id="SSF47060">
    <property type="entry name" value="S15/NS1 RNA-binding domain"/>
    <property type="match status" value="1"/>
</dbReference>
<dbReference type="PROSITE" id="PS00362">
    <property type="entry name" value="RIBOSOMAL_S15"/>
    <property type="match status" value="1"/>
</dbReference>